<evidence type="ECO:0000255" key="1">
    <source>
        <dbReference type="HAMAP-Rule" id="MF_00134"/>
    </source>
</evidence>
<accession>Q7VU67</accession>
<dbReference type="EC" id="4.1.1.48" evidence="1"/>
<dbReference type="EMBL" id="BX640421">
    <property type="protein sequence ID" value="CAE43527.1"/>
    <property type="molecule type" value="Genomic_DNA"/>
</dbReference>
<dbReference type="RefSeq" id="NP_881805.1">
    <property type="nucleotide sequence ID" value="NC_002929.2"/>
</dbReference>
<dbReference type="RefSeq" id="WP_010931375.1">
    <property type="nucleotide sequence ID" value="NZ_CP039022.1"/>
</dbReference>
<dbReference type="SMR" id="Q7VU67"/>
<dbReference type="STRING" id="257313.BP3261"/>
<dbReference type="PaxDb" id="257313-BP3261"/>
<dbReference type="GeneID" id="69603187"/>
<dbReference type="KEGG" id="bpe:BP3261"/>
<dbReference type="PATRIC" id="fig|257313.5.peg.3530"/>
<dbReference type="eggNOG" id="COG0134">
    <property type="taxonomic scope" value="Bacteria"/>
</dbReference>
<dbReference type="HOGENOM" id="CLU_034247_2_0_4"/>
<dbReference type="UniPathway" id="UPA00035">
    <property type="reaction ID" value="UER00043"/>
</dbReference>
<dbReference type="Proteomes" id="UP000002676">
    <property type="component" value="Chromosome"/>
</dbReference>
<dbReference type="GO" id="GO:0004425">
    <property type="term" value="F:indole-3-glycerol-phosphate synthase activity"/>
    <property type="evidence" value="ECO:0007669"/>
    <property type="project" value="UniProtKB-UniRule"/>
</dbReference>
<dbReference type="GO" id="GO:0004640">
    <property type="term" value="F:phosphoribosylanthranilate isomerase activity"/>
    <property type="evidence" value="ECO:0007669"/>
    <property type="project" value="TreeGrafter"/>
</dbReference>
<dbReference type="GO" id="GO:0000162">
    <property type="term" value="P:L-tryptophan biosynthetic process"/>
    <property type="evidence" value="ECO:0007669"/>
    <property type="project" value="UniProtKB-UniRule"/>
</dbReference>
<dbReference type="CDD" id="cd00331">
    <property type="entry name" value="IGPS"/>
    <property type="match status" value="1"/>
</dbReference>
<dbReference type="FunFam" id="3.20.20.70:FF:000024">
    <property type="entry name" value="Indole-3-glycerol phosphate synthase"/>
    <property type="match status" value="1"/>
</dbReference>
<dbReference type="Gene3D" id="3.20.20.70">
    <property type="entry name" value="Aldolase class I"/>
    <property type="match status" value="1"/>
</dbReference>
<dbReference type="HAMAP" id="MF_00134_B">
    <property type="entry name" value="IGPS_B"/>
    <property type="match status" value="1"/>
</dbReference>
<dbReference type="InterPro" id="IPR013785">
    <property type="entry name" value="Aldolase_TIM"/>
</dbReference>
<dbReference type="InterPro" id="IPR045186">
    <property type="entry name" value="Indole-3-glycerol_P_synth"/>
</dbReference>
<dbReference type="InterPro" id="IPR013798">
    <property type="entry name" value="Indole-3-glycerol_P_synth_dom"/>
</dbReference>
<dbReference type="InterPro" id="IPR001468">
    <property type="entry name" value="Indole-3-GlycerolPSynthase_CS"/>
</dbReference>
<dbReference type="InterPro" id="IPR011060">
    <property type="entry name" value="RibuloseP-bd_barrel"/>
</dbReference>
<dbReference type="NCBIfam" id="NF001370">
    <property type="entry name" value="PRK00278.1-2"/>
    <property type="match status" value="1"/>
</dbReference>
<dbReference type="NCBIfam" id="NF001373">
    <property type="entry name" value="PRK00278.1-6"/>
    <property type="match status" value="1"/>
</dbReference>
<dbReference type="NCBIfam" id="NF001377">
    <property type="entry name" value="PRK00278.2-4"/>
    <property type="match status" value="1"/>
</dbReference>
<dbReference type="PANTHER" id="PTHR22854:SF2">
    <property type="entry name" value="INDOLE-3-GLYCEROL-PHOSPHATE SYNTHASE"/>
    <property type="match status" value="1"/>
</dbReference>
<dbReference type="PANTHER" id="PTHR22854">
    <property type="entry name" value="TRYPTOPHAN BIOSYNTHESIS PROTEIN"/>
    <property type="match status" value="1"/>
</dbReference>
<dbReference type="Pfam" id="PF00218">
    <property type="entry name" value="IGPS"/>
    <property type="match status" value="1"/>
</dbReference>
<dbReference type="SUPFAM" id="SSF51366">
    <property type="entry name" value="Ribulose-phoshate binding barrel"/>
    <property type="match status" value="1"/>
</dbReference>
<dbReference type="PROSITE" id="PS00614">
    <property type="entry name" value="IGPS"/>
    <property type="match status" value="1"/>
</dbReference>
<proteinExistence type="inferred from homology"/>
<gene>
    <name evidence="1" type="primary">trpC</name>
    <name type="ordered locus">BP3261</name>
</gene>
<name>TRPC_BORPE</name>
<feature type="chain" id="PRO_1000018445" description="Indole-3-glycerol phosphate synthase">
    <location>
        <begin position="1"/>
        <end position="262"/>
    </location>
</feature>
<protein>
    <recommendedName>
        <fullName evidence="1">Indole-3-glycerol phosphate synthase</fullName>
        <shortName evidence="1">IGPS</shortName>
        <ecNumber evidence="1">4.1.1.48</ecNumber>
    </recommendedName>
</protein>
<comment type="catalytic activity">
    <reaction evidence="1">
        <text>1-(2-carboxyphenylamino)-1-deoxy-D-ribulose 5-phosphate + H(+) = (1S,2R)-1-C-(indol-3-yl)glycerol 3-phosphate + CO2 + H2O</text>
        <dbReference type="Rhea" id="RHEA:23476"/>
        <dbReference type="ChEBI" id="CHEBI:15377"/>
        <dbReference type="ChEBI" id="CHEBI:15378"/>
        <dbReference type="ChEBI" id="CHEBI:16526"/>
        <dbReference type="ChEBI" id="CHEBI:58613"/>
        <dbReference type="ChEBI" id="CHEBI:58866"/>
        <dbReference type="EC" id="4.1.1.48"/>
    </reaction>
</comment>
<comment type="pathway">
    <text evidence="1">Amino-acid biosynthesis; L-tryptophan biosynthesis; L-tryptophan from chorismate: step 4/5.</text>
</comment>
<comment type="similarity">
    <text evidence="1">Belongs to the TrpC family.</text>
</comment>
<sequence>MNDILAKILAVKAEEVATARQMRSEAELLREAQARQDVRGFAQAIEDKISQGKAGVIAEIKKASPSKGVLRENFDPAEIAASYAMHGAACLSVLTDVQFFQGSHDNLRRARAACSLPVLRKDFIIDPYQIISARAMGADCVLLIVATLAPAQLRDLETLAIDLGMDVLVEVHDAKELDAALALRTPLIGINNRNLRTFETTLQTTLDLLPMIPAGKRVVTESGILKPEDVRLMREHDVQAFLVGEAFMRANDPGVELARLVA</sequence>
<organism>
    <name type="scientific">Bordetella pertussis (strain Tohama I / ATCC BAA-589 / NCTC 13251)</name>
    <dbReference type="NCBI Taxonomy" id="257313"/>
    <lineage>
        <taxon>Bacteria</taxon>
        <taxon>Pseudomonadati</taxon>
        <taxon>Pseudomonadota</taxon>
        <taxon>Betaproteobacteria</taxon>
        <taxon>Burkholderiales</taxon>
        <taxon>Alcaligenaceae</taxon>
        <taxon>Bordetella</taxon>
    </lineage>
</organism>
<reference key="1">
    <citation type="journal article" date="2003" name="Nat. Genet.">
        <title>Comparative analysis of the genome sequences of Bordetella pertussis, Bordetella parapertussis and Bordetella bronchiseptica.</title>
        <authorList>
            <person name="Parkhill J."/>
            <person name="Sebaihia M."/>
            <person name="Preston A."/>
            <person name="Murphy L.D."/>
            <person name="Thomson N.R."/>
            <person name="Harris D.E."/>
            <person name="Holden M.T.G."/>
            <person name="Churcher C.M."/>
            <person name="Bentley S.D."/>
            <person name="Mungall K.L."/>
            <person name="Cerdeno-Tarraga A.-M."/>
            <person name="Temple L."/>
            <person name="James K.D."/>
            <person name="Harris B."/>
            <person name="Quail M.A."/>
            <person name="Achtman M."/>
            <person name="Atkin R."/>
            <person name="Baker S."/>
            <person name="Basham D."/>
            <person name="Bason N."/>
            <person name="Cherevach I."/>
            <person name="Chillingworth T."/>
            <person name="Collins M."/>
            <person name="Cronin A."/>
            <person name="Davis P."/>
            <person name="Doggett J."/>
            <person name="Feltwell T."/>
            <person name="Goble A."/>
            <person name="Hamlin N."/>
            <person name="Hauser H."/>
            <person name="Holroyd S."/>
            <person name="Jagels K."/>
            <person name="Leather S."/>
            <person name="Moule S."/>
            <person name="Norberczak H."/>
            <person name="O'Neil S."/>
            <person name="Ormond D."/>
            <person name="Price C."/>
            <person name="Rabbinowitsch E."/>
            <person name="Rutter S."/>
            <person name="Sanders M."/>
            <person name="Saunders D."/>
            <person name="Seeger K."/>
            <person name="Sharp S."/>
            <person name="Simmonds M."/>
            <person name="Skelton J."/>
            <person name="Squares R."/>
            <person name="Squares S."/>
            <person name="Stevens K."/>
            <person name="Unwin L."/>
            <person name="Whitehead S."/>
            <person name="Barrell B.G."/>
            <person name="Maskell D.J."/>
        </authorList>
    </citation>
    <scope>NUCLEOTIDE SEQUENCE [LARGE SCALE GENOMIC DNA]</scope>
    <source>
        <strain>Tohama I / ATCC BAA-589 / NCTC 13251</strain>
    </source>
</reference>
<keyword id="KW-0028">Amino-acid biosynthesis</keyword>
<keyword id="KW-0057">Aromatic amino acid biosynthesis</keyword>
<keyword id="KW-0210">Decarboxylase</keyword>
<keyword id="KW-0456">Lyase</keyword>
<keyword id="KW-1185">Reference proteome</keyword>
<keyword id="KW-0822">Tryptophan biosynthesis</keyword>